<reference key="1">
    <citation type="journal article" date="2013" name="Proc. Natl. Acad. Sci. U.S.A.">
        <title>Polynucleobacter necessarius, a model for genome reduction in both free-living and symbiotic bacteria.</title>
        <authorList>
            <person name="Boscaro V."/>
            <person name="Felletti M."/>
            <person name="Vannini C."/>
            <person name="Ackerman M.S."/>
            <person name="Chain P.S."/>
            <person name="Malfatti S."/>
            <person name="Vergez L.M."/>
            <person name="Shin M."/>
            <person name="Doak T.G."/>
            <person name="Lynch M."/>
            <person name="Petroni G."/>
        </authorList>
    </citation>
    <scope>NUCLEOTIDE SEQUENCE [LARGE SCALE GENOMIC DNA]</scope>
    <source>
        <strain>STIR1</strain>
    </source>
</reference>
<name>COAD_POLNS</name>
<dbReference type="EC" id="2.7.7.3" evidence="1"/>
<dbReference type="EMBL" id="CP001010">
    <property type="protein sequence ID" value="ACB44703.1"/>
    <property type="molecule type" value="Genomic_DNA"/>
</dbReference>
<dbReference type="SMR" id="B1XS68"/>
<dbReference type="STRING" id="452638.Pnec_1629"/>
<dbReference type="KEGG" id="pne:Pnec_1629"/>
<dbReference type="eggNOG" id="COG0669">
    <property type="taxonomic scope" value="Bacteria"/>
</dbReference>
<dbReference type="HOGENOM" id="CLU_100149_0_1_4"/>
<dbReference type="OrthoDB" id="9806661at2"/>
<dbReference type="UniPathway" id="UPA00241">
    <property type="reaction ID" value="UER00355"/>
</dbReference>
<dbReference type="GO" id="GO:0005737">
    <property type="term" value="C:cytoplasm"/>
    <property type="evidence" value="ECO:0007669"/>
    <property type="project" value="UniProtKB-SubCell"/>
</dbReference>
<dbReference type="GO" id="GO:0005524">
    <property type="term" value="F:ATP binding"/>
    <property type="evidence" value="ECO:0007669"/>
    <property type="project" value="UniProtKB-KW"/>
</dbReference>
<dbReference type="GO" id="GO:0004595">
    <property type="term" value="F:pantetheine-phosphate adenylyltransferase activity"/>
    <property type="evidence" value="ECO:0007669"/>
    <property type="project" value="UniProtKB-UniRule"/>
</dbReference>
<dbReference type="GO" id="GO:0015937">
    <property type="term" value="P:coenzyme A biosynthetic process"/>
    <property type="evidence" value="ECO:0007669"/>
    <property type="project" value="UniProtKB-UniRule"/>
</dbReference>
<dbReference type="CDD" id="cd02163">
    <property type="entry name" value="PPAT"/>
    <property type="match status" value="1"/>
</dbReference>
<dbReference type="Gene3D" id="3.40.50.620">
    <property type="entry name" value="HUPs"/>
    <property type="match status" value="1"/>
</dbReference>
<dbReference type="HAMAP" id="MF_00151">
    <property type="entry name" value="PPAT_bact"/>
    <property type="match status" value="1"/>
</dbReference>
<dbReference type="InterPro" id="IPR004821">
    <property type="entry name" value="Cyt_trans-like"/>
</dbReference>
<dbReference type="InterPro" id="IPR001980">
    <property type="entry name" value="PPAT"/>
</dbReference>
<dbReference type="InterPro" id="IPR014729">
    <property type="entry name" value="Rossmann-like_a/b/a_fold"/>
</dbReference>
<dbReference type="NCBIfam" id="TIGR01510">
    <property type="entry name" value="coaD_prev_kdtB"/>
    <property type="match status" value="1"/>
</dbReference>
<dbReference type="NCBIfam" id="TIGR00125">
    <property type="entry name" value="cyt_tran_rel"/>
    <property type="match status" value="1"/>
</dbReference>
<dbReference type="PANTHER" id="PTHR21342">
    <property type="entry name" value="PHOSPHOPANTETHEINE ADENYLYLTRANSFERASE"/>
    <property type="match status" value="1"/>
</dbReference>
<dbReference type="PANTHER" id="PTHR21342:SF1">
    <property type="entry name" value="PHOSPHOPANTETHEINE ADENYLYLTRANSFERASE"/>
    <property type="match status" value="1"/>
</dbReference>
<dbReference type="Pfam" id="PF01467">
    <property type="entry name" value="CTP_transf_like"/>
    <property type="match status" value="1"/>
</dbReference>
<dbReference type="PRINTS" id="PR01020">
    <property type="entry name" value="LPSBIOSNTHSS"/>
</dbReference>
<dbReference type="SUPFAM" id="SSF52374">
    <property type="entry name" value="Nucleotidylyl transferase"/>
    <property type="match status" value="1"/>
</dbReference>
<feature type="chain" id="PRO_1000096821" description="Phosphopantetheine adenylyltransferase">
    <location>
        <begin position="1"/>
        <end position="165"/>
    </location>
</feature>
<feature type="binding site" evidence="1">
    <location>
        <begin position="9"/>
        <end position="10"/>
    </location>
    <ligand>
        <name>ATP</name>
        <dbReference type="ChEBI" id="CHEBI:30616"/>
    </ligand>
</feature>
<feature type="binding site" evidence="1">
    <location>
        <position position="9"/>
    </location>
    <ligand>
        <name>substrate</name>
    </ligand>
</feature>
<feature type="binding site" evidence="1">
    <location>
        <position position="17"/>
    </location>
    <ligand>
        <name>ATP</name>
        <dbReference type="ChEBI" id="CHEBI:30616"/>
    </ligand>
</feature>
<feature type="binding site" evidence="1">
    <location>
        <position position="41"/>
    </location>
    <ligand>
        <name>substrate</name>
    </ligand>
</feature>
<feature type="binding site" evidence="1">
    <location>
        <position position="73"/>
    </location>
    <ligand>
        <name>substrate</name>
    </ligand>
</feature>
<feature type="binding site" evidence="1">
    <location>
        <position position="87"/>
    </location>
    <ligand>
        <name>substrate</name>
    </ligand>
</feature>
<feature type="binding site" evidence="1">
    <location>
        <begin position="88"/>
        <end position="90"/>
    </location>
    <ligand>
        <name>ATP</name>
        <dbReference type="ChEBI" id="CHEBI:30616"/>
    </ligand>
</feature>
<feature type="binding site" evidence="1">
    <location>
        <position position="98"/>
    </location>
    <ligand>
        <name>ATP</name>
        <dbReference type="ChEBI" id="CHEBI:30616"/>
    </ligand>
</feature>
<feature type="binding site" evidence="1">
    <location>
        <begin position="123"/>
        <end position="129"/>
    </location>
    <ligand>
        <name>ATP</name>
        <dbReference type="ChEBI" id="CHEBI:30616"/>
    </ligand>
</feature>
<feature type="site" description="Transition state stabilizer" evidence="1">
    <location>
        <position position="17"/>
    </location>
</feature>
<organism>
    <name type="scientific">Polynucleobacter necessarius subsp. necessarius (strain STIR1)</name>
    <dbReference type="NCBI Taxonomy" id="452638"/>
    <lineage>
        <taxon>Bacteria</taxon>
        <taxon>Pseudomonadati</taxon>
        <taxon>Pseudomonadota</taxon>
        <taxon>Betaproteobacteria</taxon>
        <taxon>Burkholderiales</taxon>
        <taxon>Burkholderiaceae</taxon>
        <taxon>Polynucleobacter</taxon>
    </lineage>
</organism>
<keyword id="KW-0067">ATP-binding</keyword>
<keyword id="KW-0173">Coenzyme A biosynthesis</keyword>
<keyword id="KW-0963">Cytoplasm</keyword>
<keyword id="KW-0460">Magnesium</keyword>
<keyword id="KW-0547">Nucleotide-binding</keyword>
<keyword id="KW-0548">Nucleotidyltransferase</keyword>
<keyword id="KW-0808">Transferase</keyword>
<evidence type="ECO:0000255" key="1">
    <source>
        <dbReference type="HAMAP-Rule" id="MF_00151"/>
    </source>
</evidence>
<protein>
    <recommendedName>
        <fullName evidence="1">Phosphopantetheine adenylyltransferase</fullName>
        <ecNumber evidence="1">2.7.7.3</ecNumber>
    </recommendedName>
    <alternativeName>
        <fullName evidence="1">Dephospho-CoA pyrophosphorylase</fullName>
    </alternativeName>
    <alternativeName>
        <fullName evidence="1">Pantetheine-phosphate adenylyltransferase</fullName>
        <shortName evidence="1">PPAT</shortName>
    </alternativeName>
</protein>
<proteinExistence type="inferred from homology"/>
<gene>
    <name evidence="1" type="primary">coaD</name>
    <name type="ordered locus">Pnec_1629</name>
</gene>
<accession>B1XS68</accession>
<comment type="function">
    <text evidence="1">Reversibly transfers an adenylyl group from ATP to 4'-phosphopantetheine, yielding dephospho-CoA (dPCoA) and pyrophosphate.</text>
</comment>
<comment type="catalytic activity">
    <reaction evidence="1">
        <text>(R)-4'-phosphopantetheine + ATP + H(+) = 3'-dephospho-CoA + diphosphate</text>
        <dbReference type="Rhea" id="RHEA:19801"/>
        <dbReference type="ChEBI" id="CHEBI:15378"/>
        <dbReference type="ChEBI" id="CHEBI:30616"/>
        <dbReference type="ChEBI" id="CHEBI:33019"/>
        <dbReference type="ChEBI" id="CHEBI:57328"/>
        <dbReference type="ChEBI" id="CHEBI:61723"/>
        <dbReference type="EC" id="2.7.7.3"/>
    </reaction>
</comment>
<comment type="cofactor">
    <cofactor evidence="1">
        <name>Mg(2+)</name>
        <dbReference type="ChEBI" id="CHEBI:18420"/>
    </cofactor>
</comment>
<comment type="pathway">
    <text evidence="1">Cofactor biosynthesis; coenzyme A biosynthesis; CoA from (R)-pantothenate: step 4/5.</text>
</comment>
<comment type="subunit">
    <text evidence="1">Homohexamer.</text>
</comment>
<comment type="subcellular location">
    <subcellularLocation>
        <location evidence="1">Cytoplasm</location>
    </subcellularLocation>
</comment>
<comment type="similarity">
    <text evidence="1">Belongs to the bacterial CoaD family.</text>
</comment>
<sequence length="165" mass="18754">MTVAVYPGTFDPFTRGHEDLVRRASSIFKELIVGVADSRSKHPFFTLEERIDIAKEVLGYYPNVKVVGFSGLLKDFAREHNARVIVRGLRAVSDFEYEFQMAGMNRYLLPDVETLFLTPSDQYQFISGTFVREIASMGGDVSKFVFPSVEKWLVKKIASDSQNKE</sequence>